<proteinExistence type="evidence at protein level"/>
<reference key="1">
    <citation type="journal article" date="1987" name="Nature">
        <title>Use of a cDNA clone to identify a supposed precursor protein containing valosin.</title>
        <authorList>
            <person name="Koller K.J."/>
            <person name="Brownstein M.J."/>
        </authorList>
    </citation>
    <scope>NUCLEOTIDE SEQUENCE [MRNA]</scope>
</reference>
<reference key="2">
    <citation type="journal article" date="1985" name="FEBS Lett.">
        <title>Valosin: isolation and characterization of a novel peptide from porcine intestine.</title>
        <authorList>
            <person name="Schmidt W.E."/>
            <person name="Mutt V."/>
            <person name="Carlquist M."/>
            <person name="Kratzin H."/>
            <person name="Conlon J.M."/>
            <person name="Creutzfeldt W."/>
        </authorList>
    </citation>
    <scope>PROTEIN SEQUENCE OF 493-517</scope>
</reference>
<reference key="3">
    <citation type="journal article" date="1989" name="Life Sci.">
        <title>The generation of valosin-like peptides from a precursor protein in vitro as an extraction artifact.</title>
        <authorList>
            <person name="Gill J.S."/>
            <person name="Ghatei M.A."/>
            <person name="Domin J."/>
            <person name="Bloom S.R."/>
        </authorList>
    </citation>
    <scope>SHOWS THAT VALOSIN IS A PURIFICATION ARTIFACT</scope>
</reference>
<feature type="initiator methionine" description="Removed" evidence="4">
    <location>
        <position position="1"/>
    </location>
</feature>
<feature type="chain" id="PRO_0000084574" description="Transitional endoplasmic reticulum ATPase">
    <location>
        <begin position="2"/>
        <end position="806"/>
    </location>
</feature>
<feature type="region of interest" description="Disordered" evidence="6">
    <location>
        <begin position="708"/>
        <end position="727"/>
    </location>
</feature>
<feature type="region of interest" description="Disordered" evidence="6">
    <location>
        <begin position="768"/>
        <end position="806"/>
    </location>
</feature>
<feature type="region of interest" description="Interaction with UBXN6" evidence="1">
    <location>
        <begin position="797"/>
        <end position="806"/>
    </location>
</feature>
<feature type="compositionally biased region" description="Gly residues" evidence="6">
    <location>
        <begin position="777"/>
        <end position="793"/>
    </location>
</feature>
<feature type="binding site" evidence="4">
    <location>
        <begin position="247"/>
        <end position="253"/>
    </location>
    <ligand>
        <name>ATP</name>
        <dbReference type="ChEBI" id="CHEBI:30616"/>
        <label>1</label>
    </ligand>
</feature>
<feature type="binding site" evidence="4">
    <location>
        <position position="348"/>
    </location>
    <ligand>
        <name>ATP</name>
        <dbReference type="ChEBI" id="CHEBI:30616"/>
        <label>1</label>
    </ligand>
</feature>
<feature type="binding site" evidence="4">
    <location>
        <position position="384"/>
    </location>
    <ligand>
        <name>ATP</name>
        <dbReference type="ChEBI" id="CHEBI:30616"/>
        <label>1</label>
    </ligand>
</feature>
<feature type="binding site" evidence="5">
    <location>
        <begin position="521"/>
        <end position="526"/>
    </location>
    <ligand>
        <name>ATP</name>
        <dbReference type="ChEBI" id="CHEBI:30616"/>
        <label>2</label>
    </ligand>
</feature>
<feature type="modified residue" description="N-acetylalanine" evidence="4">
    <location>
        <position position="2"/>
    </location>
</feature>
<feature type="modified residue" description="Phosphoserine" evidence="4">
    <location>
        <position position="3"/>
    </location>
</feature>
<feature type="modified residue" description="Phosphoserine" evidence="4">
    <location>
        <position position="7"/>
    </location>
</feature>
<feature type="modified residue" description="Phosphoserine" evidence="4">
    <location>
        <position position="13"/>
    </location>
</feature>
<feature type="modified residue" description="Phosphoserine" evidence="4">
    <location>
        <position position="37"/>
    </location>
</feature>
<feature type="modified residue" description="N6,N6,N6-trimethyllysine; by VCPKMT" evidence="4">
    <location>
        <position position="315"/>
    </location>
</feature>
<feature type="modified residue" description="Phosphothreonine" evidence="4">
    <location>
        <position position="436"/>
    </location>
</feature>
<feature type="modified residue" description="Phosphoserine" evidence="4">
    <location>
        <position position="462"/>
    </location>
</feature>
<feature type="modified residue" description="N6-acetyllysine" evidence="5">
    <location>
        <position position="502"/>
    </location>
</feature>
<feature type="modified residue" description="N6-acetyllysine" evidence="5">
    <location>
        <position position="505"/>
    </location>
</feature>
<feature type="modified residue" description="N6-acetyllysine; alternate" evidence="5">
    <location>
        <position position="668"/>
    </location>
</feature>
<feature type="modified residue" description="N6-succinyllysine; alternate" evidence="5">
    <location>
        <position position="668"/>
    </location>
</feature>
<feature type="modified residue" description="Phosphoserine" evidence="4">
    <location>
        <position position="702"/>
    </location>
</feature>
<feature type="modified residue" description="N6-acetyllysine" evidence="5">
    <location>
        <position position="754"/>
    </location>
</feature>
<feature type="modified residue" description="Phosphoserine" evidence="4">
    <location>
        <position position="770"/>
    </location>
</feature>
<feature type="modified residue" description="Phosphoserine" evidence="4">
    <location>
        <position position="775"/>
    </location>
</feature>
<feature type="modified residue" description="Phosphoserine" evidence="4">
    <location>
        <position position="787"/>
    </location>
</feature>
<feature type="modified residue" description="Phosphotyrosine" evidence="5">
    <location>
        <position position="805"/>
    </location>
</feature>
<feature type="cross-link" description="Glycyl lysine isopeptide (Lys-Gly) (interchain with G-Cter in SUMO2)" evidence="4">
    <location>
        <position position="8"/>
    </location>
</feature>
<feature type="cross-link" description="Glycyl lysine isopeptide (Lys-Gly) (interchain with G-Cter in SUMO2)" evidence="4">
    <location>
        <position position="18"/>
    </location>
</feature>
<comment type="function">
    <text evidence="2 3 4">Necessary for the fragmentation of Golgi stacks during mitosis and for their reassembly after mitosis. Involved in the formation of the transitional endoplasmic reticulum (tER). The transfer of membranes from the endoplasmic reticulum to the Golgi apparatus occurs via 50-70 nm transition vesicles which derive from part-rough, part-smooth transitional elements of the endoplasmic reticulum (tER). Vesicle budding from the tER is an ATP-dependent process. The ternary complex containing UFD1, VCP and NPLOC4 binds ubiquitinated proteins and is necessary for the export of misfolded proteins from the ER to the cytoplasm, where they are degraded by the proteasome. The NPLOC4-UFD1-VCP complex regulates spindle disassembly at the end of mitosis and is necessary for the formation of a closed nuclear envelope. Regulates E3 ubiquitin-protein ligase activity of RNF19A. Component of the VCP/p97-AMFR/gp78 complex that participates in the final step of the sterol-mediated ubiquitination and endoplasmic reticulum-associated degradation (ERAD) of HMGCR. Mediates the endoplasmic reticulum-associated degradation of CHRNA3 in cortical neurons as part of the STUB1-VCP-UBXN2A complex (By similarity). Involved in endoplasmic reticulum stress-induced pre-emptive quality control, a mechanism that selectively attenuates the translocation of newly synthesized proteins into the endoplasmic reticulum and reroutes them to the cytosol for proteasomal degradation. Involved in clearance process by mediating G3BP1 extraction from stress granules. Also involved in DNA damage response: recruited to double-strand breaks (DSBs) sites in a RNF8- and RNF168-dependent manner and promotes the recruitment of TP53BP1 at DNA damage sites. Recruited to stalled replication forks by SPRTN: may act by mediating extraction of DNA polymerase eta (POLH) to prevent excessive translesion DNA synthesis and limit the incidence of mutations induced by DNA damage. Together with SPRTN metalloprotease, involved in the repair of covalent DNA-protein cross-links (DPCs) during DNA synthesis. Involved in interstrand cross-link repair in response to replication stress by mediating unloading of the ubiquitinated CMG helicase complex. Mediates extraction of PARP1 trapped to chromatin: recognizes and binds ubiquitinated PARP1 and promotes its removal. Required for cytoplasmic retrotranslocation of stressed/damaged mitochondrial outer-membrane proteins and their subsequent proteasomal degradation. Essential for the maturation of ubiquitin-containing autophagosomes and the clearance of ubiquitinated protein by autophagy. Acts as a negative regulator of type I interferon production by interacting with RIGI: interaction takes place when RIGI is ubiquitinated via 'Lys-63'-linked ubiquitin on its CARD domains, leading to recruit RNF125 and promote ubiquitination and degradation of RIGI. May play a role in the ubiquitin-dependent sorting of membrane proteins to lysosomes where they undergo degradation. May more particularly play a role in caveolins sorting in cells. By controlling the steady-state expression of the IGF1R receptor, indirectly regulates the insulin-like growth factor receptor signaling pathway (By similarity).</text>
</comment>
<comment type="catalytic activity">
    <reaction evidence="4">
        <text>ATP + H2O = ADP + phosphate + H(+)</text>
        <dbReference type="Rhea" id="RHEA:13065"/>
        <dbReference type="ChEBI" id="CHEBI:15377"/>
        <dbReference type="ChEBI" id="CHEBI:15378"/>
        <dbReference type="ChEBI" id="CHEBI:30616"/>
        <dbReference type="ChEBI" id="CHEBI:43474"/>
        <dbReference type="ChEBI" id="CHEBI:456216"/>
        <dbReference type="EC" id="3.6.4.6"/>
    </reaction>
</comment>
<comment type="cofactor">
    <cofactor evidence="1">
        <name>Mg(2+)</name>
        <dbReference type="ChEBI" id="CHEBI:18420"/>
    </cofactor>
</comment>
<comment type="subunit">
    <text evidence="3 4 5">Homohexamer. Forms a ring-shaped particle of 12.5 nm diameter, that displays 6-fold radial symmetry. Part of a ternary complex containing STX5A, NSFL1C and VCP. NSFL1C forms a homotrimer that binds to one end of a VCP homohexamer. The complex binds to membranes enriched in phosphatidylethanolamine-containing lipids and promotes Golgi membrane fusion. Binds to a heterodimer of NPLOC4 and UFD1, binding to this heterodimer inhibits Golgi-membrane fusion. Interaction with VCIP135 leads to dissociation of the complex via ATP hydrolysis by VCP. Part of a ternary complex containing NPLOC4, UFD1 and VCP. Interacts with NSFL1C-like protein p37; the complex has membrane fusion activity and is required for Golgi and endoplasmic reticulum biogenesis. Interacts with SELENOS and SYVN1, as well as with DERL1 (via SHP-box motif), DERL2 and DERL3; which probably transfer misfolded proteins from the ER to VCP. Interacts with SVIP and DERL1 (By similarity). Component of a complex required to couple retrotranslocation, ubiquitination and deglycosylation composed of NGLY1, SAKS1, AMFR, VCP and RAD23B. Part of a complex composed of STUB1/CHIP, VCP/p97, CHRNA3, and UBXN2A that modulates the ubiquitination and endoplasmic reticulum-associated degradation (ERAD) of CHRNA3 (By similarity). Within the complex UBXN2A acts as a scaffold protein required for the interaction of CHRNA3 with VCP/p97, this interaction also inhibits CHRNA3 ubiquitination by STUB1/CHIP and subsequently ERAD (By similarity). Interacts with UBXN2A (via UBX domain); the interaction is required for the interaction of CHRNA3 in the STUB1-VCP-UBXN2A complex (By similarity). Directly interacts with UBXN4 and RNF19A. Interacts with CASR. Interacts with UBE4B and YOD1. Interacts with clathrin. Interacts with RNF103. Interacts with TRIM13 and TRIM21. Component of a VCP/p97-AMFR/gp78 complex that participates in the final step of the endoplasmic reticulum-associated degradation (ERAD) of HMGCR. Interacts directly with AMFR/gp78 (via its VIM). Interacts with RHBDD1 (via C-terminal domain). Interacts with SPRTN; leading to recruitment to stalled replication forks. Interacts with WASHC5. Interacts with UBOX5. Interacts (via N-terminus) with UBXN7, UBXN8, and probably several other UBX domain-containing proteins (via UBX domains); the interactions are mutually exclusive with VIM-dependent interactions such as those with AMFR and SELENOS. Forms a complex with UBQLN1 and UBXN4. Interacts (via the PIM motif) with RNF31 (via the PUB domain). Interacts with RIGI and RNF125; interaction takes place when RIGI is ubiquitinated via 'Lys-63'-linked ubiquitin on its CARD domains, leading to recruit RNF125 and promote ubiquitination and degradation of RIGI. Interacts with BAG6. Interacts with UBXN10. Interacts with UBXN6; the interaction with UBXN6 is direct and competitive with UFD1. Forms a ternary complex with CAV1 and UBXN6. Interacts with PLAA, UBXN6 and YOD1; may form a complex involved in macroautophagy. Interacts with ANKZF1. Interacts with ubiquitin-binding protein FAF1. Interacts with ZFAND2B (via VIM motif); the interaction is direct. Interacts with ZFAND1 (via its ubiquitin-like region); this interaction occurs in an arsenite-dependent manner (By similarity). Interacts with CCDC47 (By similarity). Interacts with LMBR1L and UBAC2 (By similarity). Interacts with ATXN3 (By similarity). Interacts with TEX264; bridging VCP to covalent DNA-protein cross-links (DPCs) (By similarity).</text>
</comment>
<comment type="subcellular location">
    <subcellularLocation>
        <location evidence="4">Cytoplasm</location>
        <location evidence="4">Cytosol</location>
    </subcellularLocation>
    <subcellularLocation>
        <location evidence="4">Endoplasmic reticulum</location>
    </subcellularLocation>
    <subcellularLocation>
        <location evidence="4">Nucleus</location>
    </subcellularLocation>
    <subcellularLocation>
        <location evidence="4">Cytoplasm</location>
        <location evidence="4">Stress granule</location>
    </subcellularLocation>
    <text evidence="4">Recruited to the cytoplasmic surface of the endoplasmic reticulum via interaction with AMFR/gp78. Following DNA double-strand breaks, recruited to the sites of damage. Recruited to stalled replication forks via interaction with SPRTN. Recruited to damaged lysosomes decorated with K48-linked ubiquitin chains. Colocalizes with TIA1, ZFAND1 and G3BP1 in cytoplasmic stress granules (SGs) in response to arsenite-induced stress treatment (By similarity).</text>
</comment>
<comment type="PTM">
    <text evidence="4">ISGylated.</text>
</comment>
<comment type="PTM">
    <text evidence="4">Methylation at Lys-315 catalyzed by VCPKMT is increased in the presence of ASPSCR1. Lys-315 methylation may decrease ATPase activity.</text>
</comment>
<comment type="PTM">
    <text evidence="3">Phosphorylated by tyrosine kinases in response to T-cell antigen receptor activation. Phosphorylated in mitotic cells.</text>
</comment>
<comment type="similarity">
    <text evidence="7">Belongs to the AAA ATPase family.</text>
</comment>
<comment type="caution">
    <text evidence="7">Valosin is an artifact of purification procedure, generated in vitro by cleavage of the whole protein upon acid extraction of tissues.</text>
</comment>
<organism>
    <name type="scientific">Sus scrofa</name>
    <name type="common">Pig</name>
    <dbReference type="NCBI Taxonomy" id="9823"/>
    <lineage>
        <taxon>Eukaryota</taxon>
        <taxon>Metazoa</taxon>
        <taxon>Chordata</taxon>
        <taxon>Craniata</taxon>
        <taxon>Vertebrata</taxon>
        <taxon>Euteleostomi</taxon>
        <taxon>Mammalia</taxon>
        <taxon>Eutheria</taxon>
        <taxon>Laurasiatheria</taxon>
        <taxon>Artiodactyla</taxon>
        <taxon>Suina</taxon>
        <taxon>Suidae</taxon>
        <taxon>Sus</taxon>
    </lineage>
</organism>
<keyword id="KW-0007">Acetylation</keyword>
<keyword id="KW-0067">ATP-binding</keyword>
<keyword id="KW-0072">Autophagy</keyword>
<keyword id="KW-0963">Cytoplasm</keyword>
<keyword id="KW-0903">Direct protein sequencing</keyword>
<keyword id="KW-0227">DNA damage</keyword>
<keyword id="KW-0234">DNA repair</keyword>
<keyword id="KW-0256">Endoplasmic reticulum</keyword>
<keyword id="KW-0378">Hydrolase</keyword>
<keyword id="KW-1017">Isopeptide bond</keyword>
<keyword id="KW-0446">Lipid-binding</keyword>
<keyword id="KW-0488">Methylation</keyword>
<keyword id="KW-0547">Nucleotide-binding</keyword>
<keyword id="KW-0539">Nucleus</keyword>
<keyword id="KW-0597">Phosphoprotein</keyword>
<keyword id="KW-1185">Reference proteome</keyword>
<keyword id="KW-0813">Transport</keyword>
<keyword id="KW-0832">Ubl conjugation</keyword>
<keyword id="KW-0833">Ubl conjugation pathway</keyword>
<protein>
    <recommendedName>
        <fullName>Transitional endoplasmic reticulum ATPase</fullName>
        <shortName>TER ATPase</shortName>
        <ecNumber evidence="4">3.6.4.6</ecNumber>
    </recommendedName>
    <alternativeName>
        <fullName>15S Mg(2+)-ATPase p97 subunit</fullName>
    </alternativeName>
    <alternativeName>
        <fullName>Valosin-containing protein</fullName>
        <shortName>VCP</shortName>
    </alternativeName>
</protein>
<name>TERA_PIG</name>
<accession>P03974</accession>
<gene>
    <name type="primary">VCP</name>
</gene>
<sequence length="806" mass="89289">MASGADSKGDDLSTAILKQKNRPNRLIVDEAINEDNSVVSLSQPKMDELQLFRGDTVLLKGKKRREAVCIVLSDDTCSDEKIRMNRVVRNNLRVHLGDVISIQPCPDVKYGKRIHVLPIDDTVEGITGNLFEVYLKPYFLEAYRPIRKGDIFLVRGGMRAVEFKVVETDPSPYCIVAPDTVIHCEGEPIKREDEEESLNEVGYDDIGGCRKQLAQIKEMVELPLRHPALFKAIGVKPPRGILLYGPPGTGKTLIARAVANETGAFFFLINGPEIMSKLAGESESNLRKAFEEAEKNAPAIIFIDELDAIAPKREKTHGEVERRIVSQLLTLMDGLKQRAHVIVMAATNRPNSIDPALRRFGRFDREVDIGIPDATGRLEILQIHTKNMKLADDVDLEQVANETHGHVGADLAALCSEAALQAIRKKMDLIDLEDETIDAEVMNSLAVTMDDFRWALSQSNPSALRETVVEVPQVTWEDIGGLEDVKRELQDLVQYPVEHPDKFLKFGMTPSKGVLFYGPPGCGKTLLAKAIANECQANFISIKGPELLTMWFGESEANVREIFDKARQAAPCVLFFDELDSIAKARGGNIGDGGGAADRVINQILTEMDGMSTKKNVFIIGATNRPDIIDPAILRPGRLDQLIYIPLPDEKSRVAILKANLRKSPVAKDVDLEFLAKMTNGFSGADLTEICQRACKLAIRESIESEIRRERERQTNPSAMEVEEDDPVPEIRRDHFEEAMRFARRSVSDNDIRKYEMFAQTLQQSRGFGSFRFPSGNQGGAGPSQGSGGGTGGSVYTEDNDDDLYG</sequence>
<evidence type="ECO:0000250" key="1"/>
<evidence type="ECO:0000250" key="2">
    <source>
        <dbReference type="UniProtKB" id="P23787"/>
    </source>
</evidence>
<evidence type="ECO:0000250" key="3">
    <source>
        <dbReference type="UniProtKB" id="P46462"/>
    </source>
</evidence>
<evidence type="ECO:0000250" key="4">
    <source>
        <dbReference type="UniProtKB" id="P55072"/>
    </source>
</evidence>
<evidence type="ECO:0000250" key="5">
    <source>
        <dbReference type="UniProtKB" id="Q01853"/>
    </source>
</evidence>
<evidence type="ECO:0000256" key="6">
    <source>
        <dbReference type="SAM" id="MobiDB-lite"/>
    </source>
</evidence>
<evidence type="ECO:0000305" key="7"/>
<dbReference type="EC" id="3.6.4.6" evidence="4"/>
<dbReference type="EMBL" id="M30143">
    <property type="protein sequence ID" value="AAA31142.1"/>
    <property type="molecule type" value="mRNA"/>
</dbReference>
<dbReference type="PIR" id="A26360">
    <property type="entry name" value="VPPG"/>
</dbReference>
<dbReference type="RefSeq" id="NP_999445.1">
    <property type="nucleotide sequence ID" value="NM_214280.1"/>
</dbReference>
<dbReference type="SMR" id="P03974"/>
<dbReference type="BioGRID" id="1149651">
    <property type="interactions" value="1"/>
</dbReference>
<dbReference type="FunCoup" id="P03974">
    <property type="interactions" value="1671"/>
</dbReference>
<dbReference type="STRING" id="9823.ENSSSCP00000035359"/>
<dbReference type="PaxDb" id="9823-ENSSSCP00000005692"/>
<dbReference type="PeptideAtlas" id="P03974"/>
<dbReference type="GeneID" id="397524"/>
<dbReference type="KEGG" id="ssc:397524"/>
<dbReference type="CTD" id="7415"/>
<dbReference type="eggNOG" id="KOG0730">
    <property type="taxonomic scope" value="Eukaryota"/>
</dbReference>
<dbReference type="InParanoid" id="P03974"/>
<dbReference type="OrthoDB" id="27435at2759"/>
<dbReference type="Proteomes" id="UP000008227">
    <property type="component" value="Unplaced"/>
</dbReference>
<dbReference type="Proteomes" id="UP000314985">
    <property type="component" value="Unplaced"/>
</dbReference>
<dbReference type="Proteomes" id="UP000694570">
    <property type="component" value="Unplaced"/>
</dbReference>
<dbReference type="Proteomes" id="UP000694571">
    <property type="component" value="Unplaced"/>
</dbReference>
<dbReference type="Proteomes" id="UP000694720">
    <property type="component" value="Unplaced"/>
</dbReference>
<dbReference type="Proteomes" id="UP000694722">
    <property type="component" value="Unplaced"/>
</dbReference>
<dbReference type="Proteomes" id="UP000694723">
    <property type="component" value="Unplaced"/>
</dbReference>
<dbReference type="Proteomes" id="UP000694724">
    <property type="component" value="Unplaced"/>
</dbReference>
<dbReference type="Proteomes" id="UP000694725">
    <property type="component" value="Unplaced"/>
</dbReference>
<dbReference type="Proteomes" id="UP000694726">
    <property type="component" value="Unplaced"/>
</dbReference>
<dbReference type="Proteomes" id="UP000694727">
    <property type="component" value="Unplaced"/>
</dbReference>
<dbReference type="Proteomes" id="UP000694728">
    <property type="component" value="Unplaced"/>
</dbReference>
<dbReference type="GO" id="GO:0005737">
    <property type="term" value="C:cytoplasm"/>
    <property type="evidence" value="ECO:0000250"/>
    <property type="project" value="UniProtKB"/>
</dbReference>
<dbReference type="GO" id="GO:0010494">
    <property type="term" value="C:cytoplasmic stress granule"/>
    <property type="evidence" value="ECO:0000250"/>
    <property type="project" value="UniProtKB"/>
</dbReference>
<dbReference type="GO" id="GO:0005829">
    <property type="term" value="C:cytosol"/>
    <property type="evidence" value="ECO:0000318"/>
    <property type="project" value="GO_Central"/>
</dbReference>
<dbReference type="GO" id="GO:0005634">
    <property type="term" value="C:nucleus"/>
    <property type="evidence" value="ECO:0000318"/>
    <property type="project" value="GO_Central"/>
</dbReference>
<dbReference type="GO" id="GO:0035861">
    <property type="term" value="C:site of double-strand break"/>
    <property type="evidence" value="ECO:0000250"/>
    <property type="project" value="UniProtKB"/>
</dbReference>
<dbReference type="GO" id="GO:0034098">
    <property type="term" value="C:VCP-NPL4-UFD1 AAA ATPase complex"/>
    <property type="evidence" value="ECO:0000318"/>
    <property type="project" value="GO_Central"/>
</dbReference>
<dbReference type="GO" id="GO:0005524">
    <property type="term" value="F:ATP binding"/>
    <property type="evidence" value="ECO:0007669"/>
    <property type="project" value="UniProtKB-KW"/>
</dbReference>
<dbReference type="GO" id="GO:0016887">
    <property type="term" value="F:ATP hydrolysis activity"/>
    <property type="evidence" value="ECO:0000318"/>
    <property type="project" value="GO_Central"/>
</dbReference>
<dbReference type="GO" id="GO:0008289">
    <property type="term" value="F:lipid binding"/>
    <property type="evidence" value="ECO:0007669"/>
    <property type="project" value="UniProtKB-KW"/>
</dbReference>
<dbReference type="GO" id="GO:0031593">
    <property type="term" value="F:polyubiquitin modification-dependent protein binding"/>
    <property type="evidence" value="ECO:0000318"/>
    <property type="project" value="GO_Central"/>
</dbReference>
<dbReference type="GO" id="GO:0097352">
    <property type="term" value="P:autophagosome maturation"/>
    <property type="evidence" value="ECO:0000250"/>
    <property type="project" value="UniProtKB"/>
</dbReference>
<dbReference type="GO" id="GO:0006914">
    <property type="term" value="P:autophagy"/>
    <property type="evidence" value="ECO:0000250"/>
    <property type="project" value="UniProtKB"/>
</dbReference>
<dbReference type="GO" id="GO:1903843">
    <property type="term" value="P:cellular response to arsenite ion"/>
    <property type="evidence" value="ECO:0000250"/>
    <property type="project" value="UniProtKB"/>
</dbReference>
<dbReference type="GO" id="GO:0034605">
    <property type="term" value="P:cellular response to heat"/>
    <property type="evidence" value="ECO:0000250"/>
    <property type="project" value="UniProtKB"/>
</dbReference>
<dbReference type="GO" id="GO:0006974">
    <property type="term" value="P:DNA damage response"/>
    <property type="evidence" value="ECO:0000250"/>
    <property type="project" value="UniProtKB"/>
</dbReference>
<dbReference type="GO" id="GO:0006281">
    <property type="term" value="P:DNA repair"/>
    <property type="evidence" value="ECO:0000250"/>
    <property type="project" value="UniProtKB"/>
</dbReference>
<dbReference type="GO" id="GO:0006302">
    <property type="term" value="P:double-strand break repair"/>
    <property type="evidence" value="ECO:0000250"/>
    <property type="project" value="UniProtKB"/>
</dbReference>
<dbReference type="GO" id="GO:0061857">
    <property type="term" value="P:endoplasmic reticulum stress-induced pre-emptive quality control"/>
    <property type="evidence" value="ECO:0000250"/>
    <property type="project" value="UniProtKB"/>
</dbReference>
<dbReference type="GO" id="GO:0032510">
    <property type="term" value="P:endosome to lysosome transport via multivesicular body sorting pathway"/>
    <property type="evidence" value="ECO:0000250"/>
    <property type="project" value="UniProtKB"/>
</dbReference>
<dbReference type="GO" id="GO:0036503">
    <property type="term" value="P:ERAD pathway"/>
    <property type="evidence" value="ECO:0000250"/>
    <property type="project" value="UniProtKB"/>
</dbReference>
<dbReference type="GO" id="GO:0036297">
    <property type="term" value="P:interstrand cross-link repair"/>
    <property type="evidence" value="ECO:0000250"/>
    <property type="project" value="UniProtKB"/>
</dbReference>
<dbReference type="GO" id="GO:0016236">
    <property type="term" value="P:macroautophagy"/>
    <property type="evidence" value="ECO:0000250"/>
    <property type="project" value="UniProtKB"/>
</dbReference>
<dbReference type="GO" id="GO:0051228">
    <property type="term" value="P:mitotic spindle disassembly"/>
    <property type="evidence" value="ECO:0000318"/>
    <property type="project" value="GO_Central"/>
</dbReference>
<dbReference type="GO" id="GO:0010498">
    <property type="term" value="P:proteasomal protein catabolic process"/>
    <property type="evidence" value="ECO:0000250"/>
    <property type="project" value="UniProtKB"/>
</dbReference>
<dbReference type="GO" id="GO:0043161">
    <property type="term" value="P:proteasome-mediated ubiquitin-dependent protein catabolic process"/>
    <property type="evidence" value="ECO:0000250"/>
    <property type="project" value="UniProtKB"/>
</dbReference>
<dbReference type="GO" id="GO:0016567">
    <property type="term" value="P:protein ubiquitination"/>
    <property type="evidence" value="ECO:0000250"/>
    <property type="project" value="UniProtKB"/>
</dbReference>
<dbReference type="GO" id="GO:0106300">
    <property type="term" value="P:protein-DNA covalent cross-linking repair"/>
    <property type="evidence" value="ECO:0000250"/>
    <property type="project" value="UniProtKB"/>
</dbReference>
<dbReference type="GO" id="GO:1905634">
    <property type="term" value="P:regulation of protein localization to chromatin"/>
    <property type="evidence" value="ECO:0000250"/>
    <property type="project" value="UniProtKB"/>
</dbReference>
<dbReference type="GO" id="GO:0030970">
    <property type="term" value="P:retrograde protein transport, ER to cytosol"/>
    <property type="evidence" value="ECO:0000318"/>
    <property type="project" value="GO_Central"/>
</dbReference>
<dbReference type="GO" id="GO:0035617">
    <property type="term" value="P:stress granule disassembly"/>
    <property type="evidence" value="ECO:0000250"/>
    <property type="project" value="UniProtKB"/>
</dbReference>
<dbReference type="GO" id="GO:0019985">
    <property type="term" value="P:translesion synthesis"/>
    <property type="evidence" value="ECO:0000250"/>
    <property type="project" value="UniProtKB"/>
</dbReference>
<dbReference type="CDD" id="cd19519">
    <property type="entry name" value="RecA-like_CDC48_r1-like"/>
    <property type="match status" value="1"/>
</dbReference>
<dbReference type="CDD" id="cd19528">
    <property type="entry name" value="RecA-like_CDC48_r2-like"/>
    <property type="match status" value="1"/>
</dbReference>
<dbReference type="FunFam" id="1.10.8.60:FF:000004">
    <property type="entry name" value="Cell division control 48"/>
    <property type="match status" value="1"/>
</dbReference>
<dbReference type="FunFam" id="3.10.330.10:FF:000001">
    <property type="entry name" value="Cell division control 48"/>
    <property type="match status" value="1"/>
</dbReference>
<dbReference type="FunFam" id="2.40.40.20:FF:000003">
    <property type="entry name" value="Transitional endoplasmic reticulum ATPase"/>
    <property type="match status" value="1"/>
</dbReference>
<dbReference type="FunFam" id="3.40.50.300:FF:000012">
    <property type="entry name" value="Transitional endoplasmic reticulum ATPase"/>
    <property type="match status" value="1"/>
</dbReference>
<dbReference type="FunFam" id="3.40.50.300:FF:000048">
    <property type="entry name" value="Transitional endoplasmic reticulum ATPase"/>
    <property type="match status" value="1"/>
</dbReference>
<dbReference type="Gene3D" id="1.10.8.60">
    <property type="match status" value="1"/>
</dbReference>
<dbReference type="Gene3D" id="2.40.40.20">
    <property type="match status" value="1"/>
</dbReference>
<dbReference type="Gene3D" id="3.10.330.10">
    <property type="match status" value="1"/>
</dbReference>
<dbReference type="Gene3D" id="6.10.20.150">
    <property type="match status" value="1"/>
</dbReference>
<dbReference type="Gene3D" id="3.40.50.300">
    <property type="entry name" value="P-loop containing nucleotide triphosphate hydrolases"/>
    <property type="match status" value="2"/>
</dbReference>
<dbReference type="InterPro" id="IPR003593">
    <property type="entry name" value="AAA+_ATPase"/>
</dbReference>
<dbReference type="InterPro" id="IPR005938">
    <property type="entry name" value="AAA_ATPase_CDC48"/>
</dbReference>
<dbReference type="InterPro" id="IPR050168">
    <property type="entry name" value="AAA_ATPase_domain"/>
</dbReference>
<dbReference type="InterPro" id="IPR041569">
    <property type="entry name" value="AAA_lid_3"/>
</dbReference>
<dbReference type="InterPro" id="IPR009010">
    <property type="entry name" value="Asp_de-COase-like_dom_sf"/>
</dbReference>
<dbReference type="InterPro" id="IPR003959">
    <property type="entry name" value="ATPase_AAA_core"/>
</dbReference>
<dbReference type="InterPro" id="IPR003960">
    <property type="entry name" value="ATPase_AAA_CS"/>
</dbReference>
<dbReference type="InterPro" id="IPR004201">
    <property type="entry name" value="Cdc48_dom2"/>
</dbReference>
<dbReference type="InterPro" id="IPR029067">
    <property type="entry name" value="CDC48_domain_2-like_sf"/>
</dbReference>
<dbReference type="InterPro" id="IPR003338">
    <property type="entry name" value="CDC4_N-term_subdom"/>
</dbReference>
<dbReference type="InterPro" id="IPR027417">
    <property type="entry name" value="P-loop_NTPase"/>
</dbReference>
<dbReference type="NCBIfam" id="TIGR01243">
    <property type="entry name" value="CDC48"/>
    <property type="match status" value="1"/>
</dbReference>
<dbReference type="PANTHER" id="PTHR23077">
    <property type="entry name" value="AAA-FAMILY ATPASE"/>
    <property type="match status" value="1"/>
</dbReference>
<dbReference type="PANTHER" id="PTHR23077:SF69">
    <property type="entry name" value="TRANSITIONAL ENDOPLASMIC RETICULUM ATPASE"/>
    <property type="match status" value="1"/>
</dbReference>
<dbReference type="Pfam" id="PF00004">
    <property type="entry name" value="AAA"/>
    <property type="match status" value="2"/>
</dbReference>
<dbReference type="Pfam" id="PF17862">
    <property type="entry name" value="AAA_lid_3"/>
    <property type="match status" value="2"/>
</dbReference>
<dbReference type="Pfam" id="PF02933">
    <property type="entry name" value="CDC48_2"/>
    <property type="match status" value="1"/>
</dbReference>
<dbReference type="Pfam" id="PF02359">
    <property type="entry name" value="CDC48_N"/>
    <property type="match status" value="1"/>
</dbReference>
<dbReference type="SMART" id="SM00382">
    <property type="entry name" value="AAA"/>
    <property type="match status" value="2"/>
</dbReference>
<dbReference type="SMART" id="SM01072">
    <property type="entry name" value="CDC48_2"/>
    <property type="match status" value="1"/>
</dbReference>
<dbReference type="SMART" id="SM01073">
    <property type="entry name" value="CDC48_N"/>
    <property type="match status" value="1"/>
</dbReference>
<dbReference type="SUPFAM" id="SSF50692">
    <property type="entry name" value="ADC-like"/>
    <property type="match status" value="1"/>
</dbReference>
<dbReference type="SUPFAM" id="SSF54585">
    <property type="entry name" value="Cdc48 domain 2-like"/>
    <property type="match status" value="1"/>
</dbReference>
<dbReference type="SUPFAM" id="SSF52540">
    <property type="entry name" value="P-loop containing nucleoside triphosphate hydrolases"/>
    <property type="match status" value="2"/>
</dbReference>
<dbReference type="PROSITE" id="PS00674">
    <property type="entry name" value="AAA"/>
    <property type="match status" value="2"/>
</dbReference>